<protein>
    <recommendedName>
        <fullName>Glycine dehydrogenase (decarboxylating) 1</fullName>
        <ecNumber>1.4.4.2</ecNumber>
    </recommendedName>
    <alternativeName>
        <fullName>Glycine cleavage system P-protein 1</fullName>
    </alternativeName>
    <alternativeName>
        <fullName>Glycine decarboxylase 1</fullName>
    </alternativeName>
    <alternativeName>
        <fullName>Glycine dehydrogenase (aminomethyl-transferring) 1</fullName>
    </alternativeName>
</protein>
<dbReference type="EC" id="1.4.4.2"/>
<dbReference type="EMBL" id="AE015451">
    <property type="protein sequence ID" value="AAN66613.1"/>
    <property type="molecule type" value="Genomic_DNA"/>
</dbReference>
<dbReference type="RefSeq" id="NP_743149.1">
    <property type="nucleotide sequence ID" value="NC_002947.4"/>
</dbReference>
<dbReference type="SMR" id="Q88P65"/>
<dbReference type="STRING" id="160488.PP_0988"/>
<dbReference type="PaxDb" id="160488-PP_0988"/>
<dbReference type="KEGG" id="ppu:PP_0988"/>
<dbReference type="PATRIC" id="fig|160488.4.peg.1048"/>
<dbReference type="eggNOG" id="COG0403">
    <property type="taxonomic scope" value="Bacteria"/>
</dbReference>
<dbReference type="eggNOG" id="COG1003">
    <property type="taxonomic scope" value="Bacteria"/>
</dbReference>
<dbReference type="HOGENOM" id="CLU_004620_3_2_6"/>
<dbReference type="OrthoDB" id="9801272at2"/>
<dbReference type="PhylomeDB" id="Q88P65"/>
<dbReference type="BioCyc" id="PPUT160488:G1G01-1061-MONOMER"/>
<dbReference type="Proteomes" id="UP000000556">
    <property type="component" value="Chromosome"/>
</dbReference>
<dbReference type="GO" id="GO:0005829">
    <property type="term" value="C:cytosol"/>
    <property type="evidence" value="ECO:0007669"/>
    <property type="project" value="TreeGrafter"/>
</dbReference>
<dbReference type="GO" id="GO:0005960">
    <property type="term" value="C:glycine cleavage complex"/>
    <property type="evidence" value="ECO:0007669"/>
    <property type="project" value="TreeGrafter"/>
</dbReference>
<dbReference type="GO" id="GO:0016594">
    <property type="term" value="F:glycine binding"/>
    <property type="evidence" value="ECO:0007669"/>
    <property type="project" value="TreeGrafter"/>
</dbReference>
<dbReference type="GO" id="GO:0004375">
    <property type="term" value="F:glycine dehydrogenase (decarboxylating) activity"/>
    <property type="evidence" value="ECO:0007669"/>
    <property type="project" value="UniProtKB-EC"/>
</dbReference>
<dbReference type="GO" id="GO:0030170">
    <property type="term" value="F:pyridoxal phosphate binding"/>
    <property type="evidence" value="ECO:0007669"/>
    <property type="project" value="TreeGrafter"/>
</dbReference>
<dbReference type="GO" id="GO:0019464">
    <property type="term" value="P:glycine decarboxylation via glycine cleavage system"/>
    <property type="evidence" value="ECO:0007669"/>
    <property type="project" value="UniProtKB-UniRule"/>
</dbReference>
<dbReference type="CDD" id="cd00613">
    <property type="entry name" value="GDC-P"/>
    <property type="match status" value="1"/>
</dbReference>
<dbReference type="FunFam" id="3.40.640.10:FF:000005">
    <property type="entry name" value="Glycine dehydrogenase (decarboxylating), mitochondrial"/>
    <property type="match status" value="1"/>
</dbReference>
<dbReference type="FunFam" id="3.90.1150.10:FF:000007">
    <property type="entry name" value="Glycine dehydrogenase (decarboxylating), mitochondrial"/>
    <property type="match status" value="1"/>
</dbReference>
<dbReference type="FunFam" id="3.40.640.10:FF:000007">
    <property type="entry name" value="glycine dehydrogenase (Decarboxylating), mitochondrial"/>
    <property type="match status" value="1"/>
</dbReference>
<dbReference type="Gene3D" id="3.90.1150.10">
    <property type="entry name" value="Aspartate Aminotransferase, domain 1"/>
    <property type="match status" value="2"/>
</dbReference>
<dbReference type="Gene3D" id="3.40.640.10">
    <property type="entry name" value="Type I PLP-dependent aspartate aminotransferase-like (Major domain)"/>
    <property type="match status" value="2"/>
</dbReference>
<dbReference type="HAMAP" id="MF_00711">
    <property type="entry name" value="GcvP"/>
    <property type="match status" value="1"/>
</dbReference>
<dbReference type="InterPro" id="IPR003437">
    <property type="entry name" value="GcvP"/>
</dbReference>
<dbReference type="InterPro" id="IPR049316">
    <property type="entry name" value="GDC-P_C"/>
</dbReference>
<dbReference type="InterPro" id="IPR049315">
    <property type="entry name" value="GDC-P_N"/>
</dbReference>
<dbReference type="InterPro" id="IPR020581">
    <property type="entry name" value="GDC_P"/>
</dbReference>
<dbReference type="InterPro" id="IPR015424">
    <property type="entry name" value="PyrdxlP-dep_Trfase"/>
</dbReference>
<dbReference type="InterPro" id="IPR015421">
    <property type="entry name" value="PyrdxlP-dep_Trfase_major"/>
</dbReference>
<dbReference type="InterPro" id="IPR015422">
    <property type="entry name" value="PyrdxlP-dep_Trfase_small"/>
</dbReference>
<dbReference type="NCBIfam" id="TIGR00461">
    <property type="entry name" value="gcvP"/>
    <property type="match status" value="1"/>
</dbReference>
<dbReference type="NCBIfam" id="NF003346">
    <property type="entry name" value="PRK04366.1"/>
    <property type="match status" value="1"/>
</dbReference>
<dbReference type="PANTHER" id="PTHR11773:SF1">
    <property type="entry name" value="GLYCINE DEHYDROGENASE (DECARBOXYLATING), MITOCHONDRIAL"/>
    <property type="match status" value="1"/>
</dbReference>
<dbReference type="PANTHER" id="PTHR11773">
    <property type="entry name" value="GLYCINE DEHYDROGENASE, DECARBOXYLATING"/>
    <property type="match status" value="1"/>
</dbReference>
<dbReference type="Pfam" id="PF21478">
    <property type="entry name" value="GcvP2_C"/>
    <property type="match status" value="1"/>
</dbReference>
<dbReference type="Pfam" id="PF02347">
    <property type="entry name" value="GDC-P"/>
    <property type="match status" value="2"/>
</dbReference>
<dbReference type="SUPFAM" id="SSF53383">
    <property type="entry name" value="PLP-dependent transferases"/>
    <property type="match status" value="2"/>
</dbReference>
<accession>Q88P65</accession>
<reference key="1">
    <citation type="journal article" date="2002" name="Environ. Microbiol.">
        <title>Complete genome sequence and comparative analysis of the metabolically versatile Pseudomonas putida KT2440.</title>
        <authorList>
            <person name="Nelson K.E."/>
            <person name="Weinel C."/>
            <person name="Paulsen I.T."/>
            <person name="Dodson R.J."/>
            <person name="Hilbert H."/>
            <person name="Martins dos Santos V.A.P."/>
            <person name="Fouts D.E."/>
            <person name="Gill S.R."/>
            <person name="Pop M."/>
            <person name="Holmes M."/>
            <person name="Brinkac L.M."/>
            <person name="Beanan M.J."/>
            <person name="DeBoy R.T."/>
            <person name="Daugherty S.C."/>
            <person name="Kolonay J.F."/>
            <person name="Madupu R."/>
            <person name="Nelson W.C."/>
            <person name="White O."/>
            <person name="Peterson J.D."/>
            <person name="Khouri H.M."/>
            <person name="Hance I."/>
            <person name="Chris Lee P."/>
            <person name="Holtzapple E.K."/>
            <person name="Scanlan D."/>
            <person name="Tran K."/>
            <person name="Moazzez A."/>
            <person name="Utterback T.R."/>
            <person name="Rizzo M."/>
            <person name="Lee K."/>
            <person name="Kosack D."/>
            <person name="Moestl D."/>
            <person name="Wedler H."/>
            <person name="Lauber J."/>
            <person name="Stjepandic D."/>
            <person name="Hoheisel J."/>
            <person name="Straetz M."/>
            <person name="Heim S."/>
            <person name="Kiewitz C."/>
            <person name="Eisen J.A."/>
            <person name="Timmis K.N."/>
            <person name="Duesterhoeft A."/>
            <person name="Tuemmler B."/>
            <person name="Fraser C.M."/>
        </authorList>
    </citation>
    <scope>NUCLEOTIDE SEQUENCE [LARGE SCALE GENOMIC DNA]</scope>
    <source>
        <strain>ATCC 47054 / DSM 6125 / CFBP 8728 / NCIMB 11950 / KT2440</strain>
    </source>
</reference>
<name>GCSP1_PSEPK</name>
<sequence>MTINLGTANEFIARHIGPRAADEQAMLTALGFDSLDAMTAAVIPDSIKGTSVLGSHDGQSEADALAALKAIAGKNQLFKSYIGQGYYNTHTPAPILRNLLENPAWYTAYTPYQPEISQGRLEALLNFQTLISDLTGLPIANASLLDEATAAAEAMTFCKRLSKNKSSHAFFASVHCHPQTLDVLRTRAEPLGIEVVVGDERELGDVSAFFGALLQYPASNGEVFDYREVVQRFHAANALVAVAADLLALTLLTPPGEFDADVAIGSAQRFGVPLGFGGPHAAYFATRDAFKRDMPGRLVGVSIDRFGKTALRLAMQTREQHIRREKATSNICTAQVLLANIASMFAVYHGPAGLKRIAERTHALTAILAAGLKALGVQVVGASAFDTLTLATGTATASLHDKARAQGINLRQIDAAHVGLSLDETSTQADVESLWQLLGGEQAQPDFTALAASTGSLLPAALLRQSAILEHPVFNRYHSETELMRYLRRLADKDLALDRSMIPLGSCTMKLNAASEMIPVTWAEFGNLHPFAPAEQSQGYLQMTTELEAMLCAATGYDAVSLQPNAGSQGEYAGLLAIRAYHRSRGEGHRDICLIPSSAHGTNPATAHMAGMRVVVTACDARGNVDVEDLRAKAIEHRERLAAIMITYPSTHGVFEEAIGEICAIIHDNGGQVYIDGANMNAMVGLCAPGKFGGDVSHLNLHKTFCIPHGGGGPGVGPIGVKSHLAPFLPGHAQLENTQGAVCAAPFGSASILPITWMYIRMMGGAGLKRASQMAILNANYIARRLEEHYPVLYTGGNGLVAHECILDLRPLKDTSGISVDDVAKRLIDFGFHAPTMSFPVAGTLMIEPTESESKEELDRFCNAMIQIREEIRAVEDGSLDKDDNPLKNAPHTAAELVGEWTHGYSREQAVYPLASLVEGKYWPPVGRVDNVFGDRNLVCACPSIESYQDA</sequence>
<feature type="chain" id="PRO_0000166927" description="Glycine dehydrogenase (decarboxylating) 1">
    <location>
        <begin position="1"/>
        <end position="951"/>
    </location>
</feature>
<feature type="modified residue" description="N6-(pyridoxal phosphate)lysine" evidence="1">
    <location>
        <position position="703"/>
    </location>
</feature>
<organism>
    <name type="scientific">Pseudomonas putida (strain ATCC 47054 / DSM 6125 / CFBP 8728 / NCIMB 11950 / KT2440)</name>
    <dbReference type="NCBI Taxonomy" id="160488"/>
    <lineage>
        <taxon>Bacteria</taxon>
        <taxon>Pseudomonadati</taxon>
        <taxon>Pseudomonadota</taxon>
        <taxon>Gammaproteobacteria</taxon>
        <taxon>Pseudomonadales</taxon>
        <taxon>Pseudomonadaceae</taxon>
        <taxon>Pseudomonas</taxon>
    </lineage>
</organism>
<comment type="function">
    <text evidence="1">The glycine cleavage system catalyzes the degradation of glycine. The P protein binds the alpha-amino group of glycine through its pyridoxal phosphate cofactor; CO(2) is released and the remaining methylamine moiety is then transferred to the lipoamide cofactor of the H protein (By similarity).</text>
</comment>
<comment type="catalytic activity">
    <reaction>
        <text>N(6)-[(R)-lipoyl]-L-lysyl-[glycine-cleavage complex H protein] + glycine + H(+) = N(6)-[(R)-S(8)-aminomethyldihydrolipoyl]-L-lysyl-[glycine-cleavage complex H protein] + CO2</text>
        <dbReference type="Rhea" id="RHEA:24304"/>
        <dbReference type="Rhea" id="RHEA-COMP:10494"/>
        <dbReference type="Rhea" id="RHEA-COMP:10495"/>
        <dbReference type="ChEBI" id="CHEBI:15378"/>
        <dbReference type="ChEBI" id="CHEBI:16526"/>
        <dbReference type="ChEBI" id="CHEBI:57305"/>
        <dbReference type="ChEBI" id="CHEBI:83099"/>
        <dbReference type="ChEBI" id="CHEBI:83143"/>
        <dbReference type="EC" id="1.4.4.2"/>
    </reaction>
</comment>
<comment type="cofactor">
    <cofactor evidence="1">
        <name>pyridoxal 5'-phosphate</name>
        <dbReference type="ChEBI" id="CHEBI:597326"/>
    </cofactor>
</comment>
<comment type="subunit">
    <text evidence="1">The glycine cleavage system is composed of four proteins: P, T, L and H.</text>
</comment>
<comment type="similarity">
    <text evidence="2">Belongs to the GcvP family.</text>
</comment>
<gene>
    <name type="primary">gcvP1</name>
    <name type="synonym">gcvP-1</name>
    <name type="ordered locus">PP_0988</name>
</gene>
<evidence type="ECO:0000250" key="1"/>
<evidence type="ECO:0000305" key="2"/>
<keyword id="KW-0560">Oxidoreductase</keyword>
<keyword id="KW-0663">Pyridoxal phosphate</keyword>
<keyword id="KW-1185">Reference proteome</keyword>
<proteinExistence type="inferred from homology"/>